<dbReference type="EMBL" id="EF222205">
    <property type="protein sequence ID" value="ABQ10599.1"/>
    <property type="molecule type" value="mRNA"/>
</dbReference>
<dbReference type="SMR" id="A8C752"/>
<dbReference type="GO" id="GO:0005829">
    <property type="term" value="C:cytosol"/>
    <property type="evidence" value="ECO:0007669"/>
    <property type="project" value="TreeGrafter"/>
</dbReference>
<dbReference type="GO" id="GO:0002128">
    <property type="term" value="P:tRNA nucleoside ribose methylation"/>
    <property type="evidence" value="ECO:0000250"/>
    <property type="project" value="UniProtKB"/>
</dbReference>
<dbReference type="InterPro" id="IPR016024">
    <property type="entry name" value="ARM-type_fold"/>
</dbReference>
<dbReference type="InterPro" id="IPR056843">
    <property type="entry name" value="THADA-like_TPR"/>
</dbReference>
<dbReference type="InterPro" id="IPR056842">
    <property type="entry name" value="THADA-like_TPR_C"/>
</dbReference>
<dbReference type="InterPro" id="IPR019442">
    <property type="entry name" value="THADA/TRM732_DUF2428"/>
</dbReference>
<dbReference type="InterPro" id="IPR051954">
    <property type="entry name" value="tRNA_methyltransferase_THADA"/>
</dbReference>
<dbReference type="PANTHER" id="PTHR14387">
    <property type="entry name" value="THADA/DEATH RECEPTOR INTERACTING PROTEIN"/>
    <property type="match status" value="1"/>
</dbReference>
<dbReference type="PANTHER" id="PTHR14387:SF7">
    <property type="entry name" value="THYROID ADENOMA-ASSOCIATED PROTEIN"/>
    <property type="match status" value="1"/>
</dbReference>
<dbReference type="Pfam" id="PF10350">
    <property type="entry name" value="DUF2428"/>
    <property type="match status" value="1"/>
</dbReference>
<dbReference type="Pfam" id="PF25150">
    <property type="entry name" value="TPR_Trm732"/>
    <property type="match status" value="1"/>
</dbReference>
<dbReference type="Pfam" id="PF25151">
    <property type="entry name" value="TPR_Trm732_C"/>
    <property type="match status" value="1"/>
</dbReference>
<dbReference type="SUPFAM" id="SSF48371">
    <property type="entry name" value="ARM repeat"/>
    <property type="match status" value="2"/>
</dbReference>
<comment type="function">
    <text evidence="1">Together with methyltransferase FTSJ1, methylates the 2'-O-ribose of nucleotides at position 32 of the anticodon loop of substrate tRNAs.</text>
</comment>
<comment type="similarity">
    <text evidence="3">Belongs to the THADA family.</text>
</comment>
<accession>A8C752</accession>
<evidence type="ECO:0000250" key="1">
    <source>
        <dbReference type="UniProtKB" id="Q6YHU6"/>
    </source>
</evidence>
<evidence type="ECO:0000255" key="2"/>
<evidence type="ECO:0000305" key="3"/>
<proteinExistence type="evidence at transcript level"/>
<protein>
    <recommendedName>
        <fullName evidence="3">tRNA (32-2'-O)-methyltransferase regulator THADA</fullName>
    </recommendedName>
    <alternativeName>
        <fullName>Thyroid adenoma-associated protein homolog</fullName>
    </alternativeName>
</protein>
<organism>
    <name type="scientific">Chlorocebus aethiops</name>
    <name type="common">Green monkey</name>
    <name type="synonym">Cercopithecus aethiops</name>
    <dbReference type="NCBI Taxonomy" id="9534"/>
    <lineage>
        <taxon>Eukaryota</taxon>
        <taxon>Metazoa</taxon>
        <taxon>Chordata</taxon>
        <taxon>Craniata</taxon>
        <taxon>Vertebrata</taxon>
        <taxon>Euteleostomi</taxon>
        <taxon>Mammalia</taxon>
        <taxon>Eutheria</taxon>
        <taxon>Euarchontoglires</taxon>
        <taxon>Primates</taxon>
        <taxon>Haplorrhini</taxon>
        <taxon>Catarrhini</taxon>
        <taxon>Cercopithecidae</taxon>
        <taxon>Cercopithecinae</taxon>
        <taxon>Chlorocebus</taxon>
    </lineage>
</organism>
<name>THADA_CHLAE</name>
<keyword id="KW-0175">Coiled coil</keyword>
<keyword id="KW-0597">Phosphoprotein</keyword>
<keyword id="KW-0819">tRNA processing</keyword>
<reference key="1">
    <citation type="journal article" date="2007" name="Gene">
        <title>A domain of the thyroid adenoma associated gene (THADA) conserved in vertebrates becomes destroyed by chromosomal rearrangements observed in thyroid adenomas.</title>
        <authorList>
            <person name="Drieschner N."/>
            <person name="Kerschling S."/>
            <person name="Soller J.T."/>
            <person name="Rippe V."/>
            <person name="Belge G."/>
            <person name="Bullerdiek J."/>
            <person name="Nimzyk R."/>
        </authorList>
    </citation>
    <scope>NUCLEOTIDE SEQUENCE [MRNA]</scope>
</reference>
<feature type="chain" id="PRO_0000344056" description="tRNA (32-2'-O)-methyltransferase regulator THADA">
    <location>
        <begin position="1"/>
        <end position="1953"/>
    </location>
</feature>
<feature type="coiled-coil region" evidence="2">
    <location>
        <begin position="888"/>
        <end position="918"/>
    </location>
</feature>
<feature type="modified residue" description="Phosphoserine" evidence="1">
    <location>
        <position position="1015"/>
    </location>
</feature>
<feature type="modified residue" description="Phosphoserine" evidence="1">
    <location>
        <position position="1024"/>
    </location>
</feature>
<feature type="modified residue" description="Phosphoserine" evidence="1">
    <location>
        <position position="1161"/>
    </location>
</feature>
<gene>
    <name type="primary">THADA</name>
</gene>
<sequence>MGVKKKKEMQVAVLTICHQDLETLKSFADAEGKNLASLLLRCVQLTDGVSQIHYVKQIVPLLEKVGKNGVCDPTIQSCLDILAGIYLSLSLKNPLKKVLASSLNSLPDFFLPEAVHRFTSRLQEELNTTDLYSYRKVIDNISSCMENFNLGRAGVNNLLKNVLHFLQKSLIEIVEENRKCAGNHIIQTQLMNDLLVGIRVSMTLVQKVQDFQGNLWKASNSPIWQNMCGLLSIFTKFLSDDDLLQTVQSTSGLAITLFIKTMFHPSEKIPHLISSVLLRSVDCTSVPEWFMNSCRSLCCGNVSGSAVLFLCQGTLAMLDWQNGSMGRSGEALLLDTAHVLFTLSSQIKEPTLEMFLSRIMASWTNSAIQVLESSSPSLRDSLNGNSSIVGRLLEYVYTHWEHPLDALRHQTKIMFKNLLQMHRLTVEGAVLVPDPFFVKLTESLLRLEWHIKGKYMCLGCLVECIGIEHILAIDKTIPSQILEVMGDQSLVPYASDLLETMFKNHKSHLKSQTAESSWIDQWHETWVSPLLFILCEGNLDQKSYVIDYYLPKLLSYSPESLQYMVKILQTSIDAKTGQEQSFPSLGSCNSRGALGALMACLRIARAHGHLQSATDTWENLVSGARIKQGLIHQHCQVRIDTLGLLCESNRSTEIVSMEEMQWIQFFITYNLNSQSPGVRQQICSLLKKLFCRIQESSQVLYKLEQNKSKHEPEKELTKQHPSVSLQQYKNFMSSICNSLFEALFPGSSYSTRFSALTILGSIAEVFHVPEGRIYTVYQLNHDIDVGRFQALMECFTSTFEDVKMLAFDLLMKLSKTAVHFQDSEKLQGLFQAALALSTSTKPYDCVTASYLLNFLIWQDALPSSLSVYLTQQVARGDGDRPASVVERNTLMVIKCLMENLEEEVYQAENSLLQAAASFPMYGRVHCITGALQKLSLNSLQLVSEWRPVVEKLLLMSYRLSTVVSPVIQSSSPEGLIPMDTDSESASRLQMILNEIQPRDTNDYFNQAKILKEHDSFDMKDLNASVVNIDISTEIKGKEVKTCDVTAQMVLVCCWRSMKEVALLLGTLCQLLPMQPVPESSDGLLTVEQVKEIGDYFKQHLLQSRHRGAFELAYTGFVKLTEVLNRCPNVSLQKLPEQWLWSVLEEIKCSDPSSKLCATRRSAGIPFYIQALLASEPKKGKMDLLKITMKELISLAGPTDDLQSTVPQVHALNILRALFRDTRLGENIIPYVADGAKAAILGFTSPVWAVRNSSTLLFSALITRIFGVKRAKDELSKTNRMTGREFFSRFPELYPFLLKQLETVANAVDSDMGEPNRHPSMFLLLLVLERLYPSPMDGTSSALSMGPFVPFIMRCGHSPVYHSREMAARALVPFVMIDHIPNTIRTLLATLPSCTDQCFRQNRIHGTLLQVFHLLQAYSDSKHRTNSDFQHELTDITVCTKAKLWLAKRQNPCLVTRAVYIDILFLLTCCLNKSVKDNQPVLESLGLWEEVRGIISGSELITGFPCAFKAPGLPQYLESLTRLTIAAVWAAAAKSGERERDVPISFSQLLESAFPEVRSLTLEALLEKFLSAASGLGENGLPPLLCNMEEKFLLLAMKENHPECFCKILKILHCMDPGEWLPQTEHCVHLTPKEFLIWTMDVASNERSEIQSVALRLASKVISHHMQTCVENRELIAAELKQWVQLVILSCEDHLPTESRLAVVEVLTSTAPLFLTNPHPILELQDTLALWKCVLTLLQSEEQAVRDAATETVTTAMSQENTCQSTEFAFCQVDASIALALALAVLCDLLQQWNQLASGLPILLRWLLGDSDDLVVCVESLHQVEEDYLFEKAEVNFWAETLIFVKYLCKHLFCLLSKSGWRLPSPEMLCHLQRMVSEQCRLLSQLFRELPPAAEFVKTVEFTRLRIQEERTLACLKLLAFLEGKEGEDTLVLSVWDSSAEARQLTLPRTEAAC</sequence>